<protein>
    <recommendedName>
        <fullName>Autophagy-related protein 13</fullName>
    </recommendedName>
</protein>
<dbReference type="EMBL" id="CR382122">
    <property type="protein sequence ID" value="CAH02080.1"/>
    <property type="molecule type" value="Genomic_DNA"/>
</dbReference>
<dbReference type="RefSeq" id="XP_451687.1">
    <property type="nucleotide sequence ID" value="XM_451687.1"/>
</dbReference>
<dbReference type="SASBDB" id="Q6CWK2"/>
<dbReference type="SMR" id="Q6CWK2"/>
<dbReference type="DIP" id="DIP-61492N"/>
<dbReference type="FunCoup" id="Q6CWK2">
    <property type="interactions" value="49"/>
</dbReference>
<dbReference type="IntAct" id="Q6CWK2">
    <property type="interactions" value="4"/>
</dbReference>
<dbReference type="STRING" id="284590.Q6CWK2"/>
<dbReference type="PaxDb" id="284590-Q6CWK2"/>
<dbReference type="KEGG" id="kla:KLLA0_B03432g"/>
<dbReference type="eggNOG" id="KOG4573">
    <property type="taxonomic scope" value="Eukaryota"/>
</dbReference>
<dbReference type="HOGENOM" id="CLU_411076_0_0_1"/>
<dbReference type="InParanoid" id="Q6CWK2"/>
<dbReference type="OMA" id="WNVCKGT"/>
<dbReference type="Proteomes" id="UP000000598">
    <property type="component" value="Chromosome B"/>
</dbReference>
<dbReference type="GO" id="GO:1990316">
    <property type="term" value="C:Atg1/ULK1 kinase complex"/>
    <property type="evidence" value="ECO:0007669"/>
    <property type="project" value="InterPro"/>
</dbReference>
<dbReference type="GO" id="GO:0005829">
    <property type="term" value="C:cytosol"/>
    <property type="evidence" value="ECO:0007669"/>
    <property type="project" value="TreeGrafter"/>
</dbReference>
<dbReference type="GO" id="GO:0000407">
    <property type="term" value="C:phagophore assembly site"/>
    <property type="evidence" value="ECO:0007669"/>
    <property type="project" value="UniProtKB-SubCell"/>
</dbReference>
<dbReference type="GO" id="GO:0000423">
    <property type="term" value="P:mitophagy"/>
    <property type="evidence" value="ECO:0007669"/>
    <property type="project" value="TreeGrafter"/>
</dbReference>
<dbReference type="GO" id="GO:0034727">
    <property type="term" value="P:piecemeal microautophagy of the nucleus"/>
    <property type="evidence" value="ECO:0007669"/>
    <property type="project" value="TreeGrafter"/>
</dbReference>
<dbReference type="GO" id="GO:0034497">
    <property type="term" value="P:protein localization to phagophore assembly site"/>
    <property type="evidence" value="ECO:0007669"/>
    <property type="project" value="TreeGrafter"/>
</dbReference>
<dbReference type="GO" id="GO:0015031">
    <property type="term" value="P:protein transport"/>
    <property type="evidence" value="ECO:0007669"/>
    <property type="project" value="UniProtKB-KW"/>
</dbReference>
<dbReference type="Gene3D" id="6.10.140.1900">
    <property type="match status" value="1"/>
</dbReference>
<dbReference type="Gene3D" id="3.30.900.10">
    <property type="entry name" value="HORMA domain"/>
    <property type="match status" value="1"/>
</dbReference>
<dbReference type="InterPro" id="IPR040182">
    <property type="entry name" value="ATG13"/>
</dbReference>
<dbReference type="InterPro" id="IPR018731">
    <property type="entry name" value="Atg13_N"/>
</dbReference>
<dbReference type="InterPro" id="IPR036570">
    <property type="entry name" value="HORMA_dom_sf"/>
</dbReference>
<dbReference type="PANTHER" id="PTHR13430">
    <property type="match status" value="1"/>
</dbReference>
<dbReference type="PANTHER" id="PTHR13430:SF4">
    <property type="entry name" value="AUTOPHAGY-RELATED PROTEIN 13"/>
    <property type="match status" value="1"/>
</dbReference>
<dbReference type="Pfam" id="PF10033">
    <property type="entry name" value="ATG13"/>
    <property type="match status" value="1"/>
</dbReference>
<accession>Q6CWK2</accession>
<evidence type="ECO:0000250" key="1"/>
<evidence type="ECO:0000250" key="2">
    <source>
        <dbReference type="UniProtKB" id="Q06628"/>
    </source>
</evidence>
<evidence type="ECO:0000256" key="3">
    <source>
        <dbReference type="SAM" id="MobiDB-lite"/>
    </source>
</evidence>
<evidence type="ECO:0000305" key="4"/>
<reference key="1">
    <citation type="journal article" date="2004" name="Nature">
        <title>Genome evolution in yeasts.</title>
        <authorList>
            <person name="Dujon B."/>
            <person name="Sherman D."/>
            <person name="Fischer G."/>
            <person name="Durrens P."/>
            <person name="Casaregola S."/>
            <person name="Lafontaine I."/>
            <person name="de Montigny J."/>
            <person name="Marck C."/>
            <person name="Neuveglise C."/>
            <person name="Talla E."/>
            <person name="Goffard N."/>
            <person name="Frangeul L."/>
            <person name="Aigle M."/>
            <person name="Anthouard V."/>
            <person name="Babour A."/>
            <person name="Barbe V."/>
            <person name="Barnay S."/>
            <person name="Blanchin S."/>
            <person name="Beckerich J.-M."/>
            <person name="Beyne E."/>
            <person name="Bleykasten C."/>
            <person name="Boisrame A."/>
            <person name="Boyer J."/>
            <person name="Cattolico L."/>
            <person name="Confanioleri F."/>
            <person name="de Daruvar A."/>
            <person name="Despons L."/>
            <person name="Fabre E."/>
            <person name="Fairhead C."/>
            <person name="Ferry-Dumazet H."/>
            <person name="Groppi A."/>
            <person name="Hantraye F."/>
            <person name="Hennequin C."/>
            <person name="Jauniaux N."/>
            <person name="Joyet P."/>
            <person name="Kachouri R."/>
            <person name="Kerrest A."/>
            <person name="Koszul R."/>
            <person name="Lemaire M."/>
            <person name="Lesur I."/>
            <person name="Ma L."/>
            <person name="Muller H."/>
            <person name="Nicaud J.-M."/>
            <person name="Nikolski M."/>
            <person name="Oztas S."/>
            <person name="Ozier-Kalogeropoulos O."/>
            <person name="Pellenz S."/>
            <person name="Potier S."/>
            <person name="Richard G.-F."/>
            <person name="Straub M.-L."/>
            <person name="Suleau A."/>
            <person name="Swennen D."/>
            <person name="Tekaia F."/>
            <person name="Wesolowski-Louvel M."/>
            <person name="Westhof E."/>
            <person name="Wirth B."/>
            <person name="Zeniou-Meyer M."/>
            <person name="Zivanovic Y."/>
            <person name="Bolotin-Fukuhara M."/>
            <person name="Thierry A."/>
            <person name="Bouchier C."/>
            <person name="Caudron B."/>
            <person name="Scarpelli C."/>
            <person name="Gaillardin C."/>
            <person name="Weissenbach J."/>
            <person name="Wincker P."/>
            <person name="Souciet J.-L."/>
        </authorList>
    </citation>
    <scope>NUCLEOTIDE SEQUENCE [LARGE SCALE GENOMIC DNA]</scope>
    <source>
        <strain>ATCC 8585 / CBS 2359 / DSM 70799 / NBRC 1267 / NRRL Y-1140 / WM37</strain>
    </source>
</reference>
<proteinExistence type="evidence at protein level"/>
<keyword id="KW-0072">Autophagy</keyword>
<keyword id="KW-0963">Cytoplasm</keyword>
<keyword id="KW-0653">Protein transport</keyword>
<keyword id="KW-1185">Reference proteome</keyword>
<keyword id="KW-0813">Transport</keyword>
<comment type="function">
    <text evidence="1">Activates the ATG1 kinase in a nutritional condition dependent manner through the TOR pathway, leading to autophagy. Also involved in cytoplasm to vacuole transport (Cvt) and more specifically in Cvt vesicle formation. Seems to play a role in the switching machinery regulating the conversion between the Cvt pathway and autophagy. Finally, ATG13 is also required for glycogen storage during stationary phase (By similarity).</text>
</comment>
<comment type="subunit">
    <text evidence="1">Interacts with ATG1 to form the ATG1-ATG13 kinase complex.</text>
</comment>
<comment type="interaction">
    <interactant intactId="EBI-16151385">
        <id>Q6CWK2</id>
    </interactant>
    <interactant intactId="EBI-16151357">
        <id>Q6CSX2</id>
        <label>ATG1</label>
    </interactant>
    <organismsDiffer>false</organismsDiffer>
    <experiments>4</experiments>
</comment>
<comment type="subcellular location">
    <subcellularLocation>
        <location evidence="2">Cytoplasm</location>
    </subcellularLocation>
    <subcellularLocation>
        <location evidence="2">Preautophagosomal structure</location>
    </subcellularLocation>
</comment>
<comment type="similarity">
    <text evidence="4">Belongs to the ATG13 family. Fungi subfamily.</text>
</comment>
<name>ATG13_KLULA</name>
<organism>
    <name type="scientific">Kluyveromyces lactis (strain ATCC 8585 / CBS 2359 / DSM 70799 / NBRC 1267 / NRRL Y-1140 / WM37)</name>
    <name type="common">Yeast</name>
    <name type="synonym">Candida sphaerica</name>
    <dbReference type="NCBI Taxonomy" id="284590"/>
    <lineage>
        <taxon>Eukaryota</taxon>
        <taxon>Fungi</taxon>
        <taxon>Dikarya</taxon>
        <taxon>Ascomycota</taxon>
        <taxon>Saccharomycotina</taxon>
        <taxon>Saccharomycetes</taxon>
        <taxon>Saccharomycetales</taxon>
        <taxon>Saccharomycetaceae</taxon>
        <taxon>Kluyveromyces</taxon>
    </lineage>
</organism>
<gene>
    <name type="primary">ATG13</name>
    <name type="ordered locus">KLLA0B03432g</name>
</gene>
<sequence>MSEGEVQVIELINNFFLKSALLLEQSKVAHNFDTEEALRDGNHLFNIETRGDPLLEAQIQPWITFDGVKTMPPLVIETYLDLRALQPNHMVYLHDADGNPWMVCKGGKKTEIVLERWLVELDKQTIDDSIDSNDPENLHKQLVLLFRYLYTLTQLLPANDIITKPHNSQQPALINVQTRLLDGSKPILSKGRVGLSKPIIASYSNTMNETNIASHLEQRKITPIKTTFGSLRITVSYRKDVDFYVIDSDDLQKRYMTPSLSNETTTVPDRRASSNCSRSMSVSPKTNTINATLFPLEGSSARRQSISSKLQPFKVGSVGSGSFVQSGSAQSTTSLVPSLSRNVSSSSVVAALKVQRGSAGSTIVNGDVPPELSSVGSGSKYSSSFGRIRRHSSIRRSESFDRTAKPRKSTENPPEDLLEFVKLLEDKKELNMKPNTILPQQDISNSLMRFQSMKSNNDALSDNLSMSMSIDQPNVRFGSNSHSPIPSFSPNYGSIPSRLSQGSRNNSNAELITSRKSSLDRHKHNLLSRTGSNVDINRRGSVGTMETTNEDSKEDEQSHMKGMHFSNEATINKDDDEDEMLMKRSFNAGTSTTEQVMGSPRSIRSISVSSYPRNQLPLKHLNLSHPTTSATTTHAKFHKSEMSPDPLHTEGAQPHTSSQHHNSSQKNDEDDDLLFVMSDMNLTN</sequence>
<feature type="chain" id="PRO_0000157970" description="Autophagy-related protein 13">
    <location>
        <begin position="1"/>
        <end position="684"/>
    </location>
</feature>
<feature type="region of interest" description="Disordered" evidence="3">
    <location>
        <begin position="260"/>
        <end position="284"/>
    </location>
</feature>
<feature type="region of interest" description="Disordered" evidence="3">
    <location>
        <begin position="394"/>
        <end position="414"/>
    </location>
</feature>
<feature type="region of interest" description="Disordered" evidence="3">
    <location>
        <begin position="491"/>
        <end position="520"/>
    </location>
</feature>
<feature type="region of interest" description="Disordered" evidence="3">
    <location>
        <begin position="532"/>
        <end position="559"/>
    </location>
</feature>
<feature type="region of interest" description="Disordered" evidence="3">
    <location>
        <begin position="623"/>
        <end position="684"/>
    </location>
</feature>
<feature type="compositionally biased region" description="Basic and acidic residues" evidence="3">
    <location>
        <begin position="395"/>
        <end position="410"/>
    </location>
</feature>
<feature type="compositionally biased region" description="Polar residues" evidence="3">
    <location>
        <begin position="491"/>
        <end position="516"/>
    </location>
</feature>
<feature type="compositionally biased region" description="Low complexity" evidence="3">
    <location>
        <begin position="624"/>
        <end position="634"/>
    </location>
</feature>
<feature type="compositionally biased region" description="Polar residues" evidence="3">
    <location>
        <begin position="654"/>
        <end position="665"/>
    </location>
</feature>